<name>LEU1_SALAR</name>
<feature type="chain" id="PRO_1000149264" description="2-isopropylmalate synthase">
    <location>
        <begin position="1"/>
        <end position="523"/>
    </location>
</feature>
<feature type="domain" description="Pyruvate carboxyltransferase" evidence="1">
    <location>
        <begin position="5"/>
        <end position="267"/>
    </location>
</feature>
<feature type="region of interest" description="Regulatory domain" evidence="1">
    <location>
        <begin position="392"/>
        <end position="523"/>
    </location>
</feature>
<feature type="binding site" evidence="1">
    <location>
        <position position="14"/>
    </location>
    <ligand>
        <name>Mn(2+)</name>
        <dbReference type="ChEBI" id="CHEBI:29035"/>
    </ligand>
</feature>
<feature type="binding site" evidence="1">
    <location>
        <position position="202"/>
    </location>
    <ligand>
        <name>Mn(2+)</name>
        <dbReference type="ChEBI" id="CHEBI:29035"/>
    </ligand>
</feature>
<feature type="binding site" evidence="1">
    <location>
        <position position="204"/>
    </location>
    <ligand>
        <name>Mn(2+)</name>
        <dbReference type="ChEBI" id="CHEBI:29035"/>
    </ligand>
</feature>
<feature type="binding site" evidence="1">
    <location>
        <position position="238"/>
    </location>
    <ligand>
        <name>Mn(2+)</name>
        <dbReference type="ChEBI" id="CHEBI:29035"/>
    </ligand>
</feature>
<accession>A9MQD8</accession>
<organism>
    <name type="scientific">Salmonella arizonae (strain ATCC BAA-731 / CDC346-86 / RSK2980)</name>
    <dbReference type="NCBI Taxonomy" id="41514"/>
    <lineage>
        <taxon>Bacteria</taxon>
        <taxon>Pseudomonadati</taxon>
        <taxon>Pseudomonadota</taxon>
        <taxon>Gammaproteobacteria</taxon>
        <taxon>Enterobacterales</taxon>
        <taxon>Enterobacteriaceae</taxon>
        <taxon>Salmonella</taxon>
    </lineage>
</organism>
<keyword id="KW-0028">Amino-acid biosynthesis</keyword>
<keyword id="KW-0100">Branched-chain amino acid biosynthesis</keyword>
<keyword id="KW-0963">Cytoplasm</keyword>
<keyword id="KW-0432">Leucine biosynthesis</keyword>
<keyword id="KW-0464">Manganese</keyword>
<keyword id="KW-0479">Metal-binding</keyword>
<keyword id="KW-1185">Reference proteome</keyword>
<keyword id="KW-0808">Transferase</keyword>
<evidence type="ECO:0000255" key="1">
    <source>
        <dbReference type="HAMAP-Rule" id="MF_01025"/>
    </source>
</evidence>
<protein>
    <recommendedName>
        <fullName evidence="1">2-isopropylmalate synthase</fullName>
        <ecNumber evidence="1">2.3.3.13</ecNumber>
    </recommendedName>
    <alternativeName>
        <fullName evidence="1">Alpha-IPM synthase</fullName>
    </alternativeName>
    <alternativeName>
        <fullName evidence="1">Alpha-isopropylmalate synthase</fullName>
    </alternativeName>
</protein>
<sequence length="523" mass="57553">MSQQVIIFDTTLRDGEQALQASLSAKEKLQIALALERMGVDVMEVGFPVSSPGDFESVQTIARIIKNSRVCALARCVEKDIDVAAQALKVADAFRIHTFIATSPMHIATKLRSTLDEVIERAVYMVKRARNYTDDVEFSCEDAGRTPVNDLARVVEAAINAGARTINIPDTVGYTMPFEFARIISGLYERVPNIDNAIISVHTHDDLGLAVGNSLAAVHAGARQVEGAMNGIGERAGNCALEEVIMAIKVRKDIMNVHTNINHHEIWRTSQTVSQICNMPIPTNKAIVGSGAFAHSSGIHQDGVLKNRENYEIMTPESIGLNQVQLNLTSRSGRAAVKHRMEEMGYQESDYNLDRLYDAFLKLADKKGQVFDYDLEALAFINKQQEEPEHFRLDYFSVQSGSSDIATASVKLACGEETKAEAANGNGPVDAIYQAINRITGYDVELVKYDLNAKGQGKDALGQVDIVVNHHGRRFHGVGLATDIVESSAKAMVHVLNNIWRAAEVEKELQRKAHNKENNKEIV</sequence>
<reference key="1">
    <citation type="submission" date="2007-11" db="EMBL/GenBank/DDBJ databases">
        <authorList>
            <consortium name="The Salmonella enterica serovar Arizonae Genome Sequencing Project"/>
            <person name="McClelland M."/>
            <person name="Sanderson E.K."/>
            <person name="Porwollik S."/>
            <person name="Spieth J."/>
            <person name="Clifton W.S."/>
            <person name="Fulton R."/>
            <person name="Chunyan W."/>
            <person name="Wollam A."/>
            <person name="Shah N."/>
            <person name="Pepin K."/>
            <person name="Bhonagiri V."/>
            <person name="Nash W."/>
            <person name="Johnson M."/>
            <person name="Thiruvilangam P."/>
            <person name="Wilson R."/>
        </authorList>
    </citation>
    <scope>NUCLEOTIDE SEQUENCE [LARGE SCALE GENOMIC DNA]</scope>
    <source>
        <strain>ATCC BAA-731 / CDC346-86 / RSK2980</strain>
    </source>
</reference>
<dbReference type="EC" id="2.3.3.13" evidence="1"/>
<dbReference type="EMBL" id="CP000880">
    <property type="protein sequence ID" value="ABX22736.1"/>
    <property type="molecule type" value="Genomic_DNA"/>
</dbReference>
<dbReference type="SMR" id="A9MQD8"/>
<dbReference type="STRING" id="41514.SARI_02889"/>
<dbReference type="KEGG" id="ses:SARI_02889"/>
<dbReference type="HOGENOM" id="CLU_022158_0_1_6"/>
<dbReference type="UniPathway" id="UPA00048">
    <property type="reaction ID" value="UER00070"/>
</dbReference>
<dbReference type="Proteomes" id="UP000002084">
    <property type="component" value="Chromosome"/>
</dbReference>
<dbReference type="GO" id="GO:0005829">
    <property type="term" value="C:cytosol"/>
    <property type="evidence" value="ECO:0007669"/>
    <property type="project" value="TreeGrafter"/>
</dbReference>
<dbReference type="GO" id="GO:0003852">
    <property type="term" value="F:2-isopropylmalate synthase activity"/>
    <property type="evidence" value="ECO:0007669"/>
    <property type="project" value="UniProtKB-UniRule"/>
</dbReference>
<dbReference type="GO" id="GO:0003985">
    <property type="term" value="F:acetyl-CoA C-acetyltransferase activity"/>
    <property type="evidence" value="ECO:0007669"/>
    <property type="project" value="UniProtKB-UniRule"/>
</dbReference>
<dbReference type="GO" id="GO:0030145">
    <property type="term" value="F:manganese ion binding"/>
    <property type="evidence" value="ECO:0007669"/>
    <property type="project" value="UniProtKB-UniRule"/>
</dbReference>
<dbReference type="GO" id="GO:0009098">
    <property type="term" value="P:L-leucine biosynthetic process"/>
    <property type="evidence" value="ECO:0007669"/>
    <property type="project" value="UniProtKB-UniRule"/>
</dbReference>
<dbReference type="CDD" id="cd07940">
    <property type="entry name" value="DRE_TIM_IPMS"/>
    <property type="match status" value="1"/>
</dbReference>
<dbReference type="FunFam" id="1.10.238.260:FF:000001">
    <property type="entry name" value="2-isopropylmalate synthase"/>
    <property type="match status" value="1"/>
</dbReference>
<dbReference type="FunFam" id="3.20.20.70:FF:000010">
    <property type="entry name" value="2-isopropylmalate synthase"/>
    <property type="match status" value="1"/>
</dbReference>
<dbReference type="FunFam" id="3.30.160.270:FF:000001">
    <property type="entry name" value="2-isopropylmalate synthase"/>
    <property type="match status" value="1"/>
</dbReference>
<dbReference type="Gene3D" id="1.10.238.260">
    <property type="match status" value="1"/>
</dbReference>
<dbReference type="Gene3D" id="3.30.160.270">
    <property type="match status" value="1"/>
</dbReference>
<dbReference type="Gene3D" id="3.20.20.70">
    <property type="entry name" value="Aldolase class I"/>
    <property type="match status" value="1"/>
</dbReference>
<dbReference type="HAMAP" id="MF_01025">
    <property type="entry name" value="LeuA_type1"/>
    <property type="match status" value="1"/>
</dbReference>
<dbReference type="InterPro" id="IPR050073">
    <property type="entry name" value="2-IPM_HCS-like"/>
</dbReference>
<dbReference type="InterPro" id="IPR013709">
    <property type="entry name" value="2-isopropylmalate_synth_dimer"/>
</dbReference>
<dbReference type="InterPro" id="IPR002034">
    <property type="entry name" value="AIPM/Hcit_synth_CS"/>
</dbReference>
<dbReference type="InterPro" id="IPR013785">
    <property type="entry name" value="Aldolase_TIM"/>
</dbReference>
<dbReference type="InterPro" id="IPR054691">
    <property type="entry name" value="LeuA/HCS_post-cat"/>
</dbReference>
<dbReference type="InterPro" id="IPR036230">
    <property type="entry name" value="LeuA_allosteric_dom_sf"/>
</dbReference>
<dbReference type="InterPro" id="IPR005671">
    <property type="entry name" value="LeuA_bact_synth"/>
</dbReference>
<dbReference type="InterPro" id="IPR000891">
    <property type="entry name" value="PYR_CT"/>
</dbReference>
<dbReference type="NCBIfam" id="TIGR00973">
    <property type="entry name" value="leuA_bact"/>
    <property type="match status" value="1"/>
</dbReference>
<dbReference type="NCBIfam" id="NF002084">
    <property type="entry name" value="PRK00915.1-1"/>
    <property type="match status" value="1"/>
</dbReference>
<dbReference type="NCBIfam" id="NF002086">
    <property type="entry name" value="PRK00915.1-3"/>
    <property type="match status" value="1"/>
</dbReference>
<dbReference type="PANTHER" id="PTHR10277:SF9">
    <property type="entry name" value="2-ISOPROPYLMALATE SYNTHASE 1, CHLOROPLASTIC-RELATED"/>
    <property type="match status" value="1"/>
</dbReference>
<dbReference type="PANTHER" id="PTHR10277">
    <property type="entry name" value="HOMOCITRATE SYNTHASE-RELATED"/>
    <property type="match status" value="1"/>
</dbReference>
<dbReference type="Pfam" id="PF22617">
    <property type="entry name" value="HCS_D2"/>
    <property type="match status" value="1"/>
</dbReference>
<dbReference type="Pfam" id="PF00682">
    <property type="entry name" value="HMGL-like"/>
    <property type="match status" value="1"/>
</dbReference>
<dbReference type="Pfam" id="PF08502">
    <property type="entry name" value="LeuA_dimer"/>
    <property type="match status" value="1"/>
</dbReference>
<dbReference type="SMART" id="SM00917">
    <property type="entry name" value="LeuA_dimer"/>
    <property type="match status" value="1"/>
</dbReference>
<dbReference type="SUPFAM" id="SSF110921">
    <property type="entry name" value="2-isopropylmalate synthase LeuA, allosteric (dimerisation) domain"/>
    <property type="match status" value="1"/>
</dbReference>
<dbReference type="SUPFAM" id="SSF51569">
    <property type="entry name" value="Aldolase"/>
    <property type="match status" value="1"/>
</dbReference>
<dbReference type="PROSITE" id="PS00815">
    <property type="entry name" value="AIPM_HOMOCIT_SYNTH_1"/>
    <property type="match status" value="1"/>
</dbReference>
<dbReference type="PROSITE" id="PS00816">
    <property type="entry name" value="AIPM_HOMOCIT_SYNTH_2"/>
    <property type="match status" value="1"/>
</dbReference>
<dbReference type="PROSITE" id="PS50991">
    <property type="entry name" value="PYR_CT"/>
    <property type="match status" value="1"/>
</dbReference>
<comment type="function">
    <text evidence="1">Catalyzes the condensation of the acetyl group of acetyl-CoA with 3-methyl-2-oxobutanoate (2-ketoisovalerate) to form 3-carboxy-3-hydroxy-4-methylpentanoate (2-isopropylmalate).</text>
</comment>
<comment type="catalytic activity">
    <reaction evidence="1">
        <text>3-methyl-2-oxobutanoate + acetyl-CoA + H2O = (2S)-2-isopropylmalate + CoA + H(+)</text>
        <dbReference type="Rhea" id="RHEA:21524"/>
        <dbReference type="ChEBI" id="CHEBI:1178"/>
        <dbReference type="ChEBI" id="CHEBI:11851"/>
        <dbReference type="ChEBI" id="CHEBI:15377"/>
        <dbReference type="ChEBI" id="CHEBI:15378"/>
        <dbReference type="ChEBI" id="CHEBI:57287"/>
        <dbReference type="ChEBI" id="CHEBI:57288"/>
        <dbReference type="EC" id="2.3.3.13"/>
    </reaction>
</comment>
<comment type="cofactor">
    <cofactor evidence="1">
        <name>Mn(2+)</name>
        <dbReference type="ChEBI" id="CHEBI:29035"/>
    </cofactor>
</comment>
<comment type="pathway">
    <text evidence="1">Amino-acid biosynthesis; L-leucine biosynthesis; L-leucine from 3-methyl-2-oxobutanoate: step 1/4.</text>
</comment>
<comment type="subunit">
    <text evidence="1">Homodimer.</text>
</comment>
<comment type="subcellular location">
    <subcellularLocation>
        <location evidence="1">Cytoplasm</location>
    </subcellularLocation>
</comment>
<comment type="similarity">
    <text evidence="1">Belongs to the alpha-IPM synthase/homocitrate synthase family. LeuA type 1 subfamily.</text>
</comment>
<proteinExistence type="inferred from homology"/>
<gene>
    <name evidence="1" type="primary">leuA</name>
    <name type="ordered locus">SARI_02889</name>
</gene>